<organism>
    <name type="scientific">Artemia franciscana</name>
    <name type="common">Brine shrimp</name>
    <name type="synonym">Artemia sanfranciscana</name>
    <dbReference type="NCBI Taxonomy" id="6661"/>
    <lineage>
        <taxon>Eukaryota</taxon>
        <taxon>Metazoa</taxon>
        <taxon>Ecdysozoa</taxon>
        <taxon>Arthropoda</taxon>
        <taxon>Crustacea</taxon>
        <taxon>Branchiopoda</taxon>
        <taxon>Anostraca</taxon>
        <taxon>Artemiidae</taxon>
        <taxon>Artemia</taxon>
    </lineage>
</organism>
<reference key="1">
    <citation type="journal article" date="1994" name="J. Mol. Evol.">
        <title>Speciation in the Artemia genus: mitochondrial DNA analysis of bisexual and parthenogenetic brine shrimps.</title>
        <authorList>
            <person name="Perez M.L."/>
            <person name="Valverde J.R."/>
            <person name="Batuecas B."/>
            <person name="Amat F."/>
            <person name="Marco R."/>
            <person name="Garesse R."/>
        </authorList>
    </citation>
    <scope>NUCLEOTIDE SEQUENCE [GENOMIC DNA]</scope>
</reference>
<gene>
    <name type="primary">ND3</name>
    <name type="synonym">ND-3</name>
</gene>
<dbReference type="EC" id="7.1.1.2"/>
<dbReference type="EMBL" id="X69067">
    <property type="protein sequence ID" value="CAA48812.1"/>
    <property type="molecule type" value="Genomic_DNA"/>
</dbReference>
<dbReference type="PIR" id="S60644">
    <property type="entry name" value="S60644"/>
</dbReference>
<dbReference type="RefSeq" id="NP_007114.1">
    <property type="nucleotide sequence ID" value="NC_001620.1"/>
</dbReference>
<dbReference type="SMR" id="Q37709"/>
<dbReference type="GeneID" id="807797"/>
<dbReference type="KEGG" id="afra:807797"/>
<dbReference type="CTD" id="4537"/>
<dbReference type="GO" id="GO:0031966">
    <property type="term" value="C:mitochondrial membrane"/>
    <property type="evidence" value="ECO:0007669"/>
    <property type="project" value="UniProtKB-SubCell"/>
</dbReference>
<dbReference type="GO" id="GO:0030964">
    <property type="term" value="C:NADH dehydrogenase complex"/>
    <property type="evidence" value="ECO:0007669"/>
    <property type="project" value="TreeGrafter"/>
</dbReference>
<dbReference type="GO" id="GO:0008137">
    <property type="term" value="F:NADH dehydrogenase (ubiquinone) activity"/>
    <property type="evidence" value="ECO:0007669"/>
    <property type="project" value="UniProtKB-EC"/>
</dbReference>
<dbReference type="Gene3D" id="1.20.58.1610">
    <property type="entry name" value="NADH:ubiquinone/plastoquinone oxidoreductase, chain 3"/>
    <property type="match status" value="1"/>
</dbReference>
<dbReference type="InterPro" id="IPR000440">
    <property type="entry name" value="NADH_UbQ/plastoQ_OxRdtase_su3"/>
</dbReference>
<dbReference type="InterPro" id="IPR038430">
    <property type="entry name" value="NDAH_ubi_oxred_su3_sf"/>
</dbReference>
<dbReference type="PANTHER" id="PTHR11058">
    <property type="entry name" value="NADH-UBIQUINONE OXIDOREDUCTASE CHAIN 3"/>
    <property type="match status" value="1"/>
</dbReference>
<dbReference type="PANTHER" id="PTHR11058:SF9">
    <property type="entry name" value="NADH-UBIQUINONE OXIDOREDUCTASE CHAIN 3"/>
    <property type="match status" value="1"/>
</dbReference>
<dbReference type="Pfam" id="PF00507">
    <property type="entry name" value="Oxidored_q4"/>
    <property type="match status" value="1"/>
</dbReference>
<accession>Q37709</accession>
<comment type="function">
    <text evidence="1">Core subunit of the mitochondrial membrane respiratory chain NADH dehydrogenase (Complex I) that is believed to belong to the minimal assembly required for catalysis. Complex I functions in the transfer of electrons from NADH to the respiratory chain. The immediate electron acceptor for the enzyme is believed to be ubiquinone (By similarity).</text>
</comment>
<comment type="catalytic activity">
    <reaction>
        <text>a ubiquinone + NADH + 5 H(+)(in) = a ubiquinol + NAD(+) + 4 H(+)(out)</text>
        <dbReference type="Rhea" id="RHEA:29091"/>
        <dbReference type="Rhea" id="RHEA-COMP:9565"/>
        <dbReference type="Rhea" id="RHEA-COMP:9566"/>
        <dbReference type="ChEBI" id="CHEBI:15378"/>
        <dbReference type="ChEBI" id="CHEBI:16389"/>
        <dbReference type="ChEBI" id="CHEBI:17976"/>
        <dbReference type="ChEBI" id="CHEBI:57540"/>
        <dbReference type="ChEBI" id="CHEBI:57945"/>
        <dbReference type="EC" id="7.1.1.2"/>
    </reaction>
</comment>
<comment type="subcellular location">
    <subcellularLocation>
        <location evidence="1">Mitochondrion membrane</location>
        <topology evidence="1">Multi-pass membrane protein</topology>
    </subcellularLocation>
</comment>
<comment type="similarity">
    <text evidence="3">Belongs to the complex I subunit 3 family.</text>
</comment>
<protein>
    <recommendedName>
        <fullName>NADH-ubiquinone oxidoreductase chain 3</fullName>
        <ecNumber>7.1.1.2</ecNumber>
    </recommendedName>
    <alternativeName>
        <fullName>NADH dehydrogenase subunit 3</fullName>
    </alternativeName>
</protein>
<geneLocation type="mitochondrion"/>
<name>NU3M_ARTSF</name>
<feature type="chain" id="PRO_0000117709" description="NADH-ubiquinone oxidoreductase chain 3">
    <location>
        <begin position="1"/>
        <end position="111"/>
    </location>
</feature>
<feature type="transmembrane region" description="Helical" evidence="2">
    <location>
        <begin position="2"/>
        <end position="22"/>
    </location>
</feature>
<feature type="transmembrane region" description="Helical" evidence="2">
    <location>
        <begin position="54"/>
        <end position="74"/>
    </location>
</feature>
<feature type="transmembrane region" description="Helical" evidence="2">
    <location>
        <begin position="82"/>
        <end position="102"/>
    </location>
</feature>
<keyword id="KW-0249">Electron transport</keyword>
<keyword id="KW-0472">Membrane</keyword>
<keyword id="KW-0496">Mitochondrion</keyword>
<keyword id="KW-0520">NAD</keyword>
<keyword id="KW-0679">Respiratory chain</keyword>
<keyword id="KW-1278">Translocase</keyword>
<keyword id="KW-0812">Transmembrane</keyword>
<keyword id="KW-1133">Transmembrane helix</keyword>
<keyword id="KW-0813">Transport</keyword>
<keyword id="KW-0830">Ubiquinone</keyword>
<sequence length="111" mass="12990">MILIWLSIFMLVFIMLTLGMFVNKKVSLDREKSSPFECGFDPLNSSRTPFSIRFFVITLIFLIFDVEIYLLLPMVYLNMSSPTTYLIIFFTFILVAGVFYEWSEGALSWIK</sequence>
<proteinExistence type="inferred from homology"/>
<evidence type="ECO:0000250" key="1"/>
<evidence type="ECO:0000255" key="2"/>
<evidence type="ECO:0000305" key="3"/>